<gene>
    <name type="ordered locus">ABC3036</name>
</gene>
<keyword id="KW-0067">ATP-binding</keyword>
<keyword id="KW-0342">GTP-binding</keyword>
<keyword id="KW-0547">Nucleotide-binding</keyword>
<keyword id="KW-1185">Reference proteome</keyword>
<proteinExistence type="inferred from homology"/>
<organism>
    <name type="scientific">Shouchella clausii (strain KSM-K16)</name>
    <name type="common">Alkalihalobacillus clausii</name>
    <dbReference type="NCBI Taxonomy" id="66692"/>
    <lineage>
        <taxon>Bacteria</taxon>
        <taxon>Bacillati</taxon>
        <taxon>Bacillota</taxon>
        <taxon>Bacilli</taxon>
        <taxon>Bacillales</taxon>
        <taxon>Bacillaceae</taxon>
        <taxon>Shouchella</taxon>
    </lineage>
</organism>
<evidence type="ECO:0000255" key="1">
    <source>
        <dbReference type="HAMAP-Rule" id="MF_00636"/>
    </source>
</evidence>
<name>Y3036_SHOC1</name>
<reference key="1">
    <citation type="submission" date="2003-10" db="EMBL/GenBank/DDBJ databases">
        <title>The complete genome sequence of the alkaliphilic Bacillus clausii KSM-K16.</title>
        <authorList>
            <person name="Takaki Y."/>
            <person name="Kageyama Y."/>
            <person name="Shimamura S."/>
            <person name="Suzuki H."/>
            <person name="Nishi S."/>
            <person name="Hatada Y."/>
            <person name="Kawai S."/>
            <person name="Ito S."/>
            <person name="Horikoshi K."/>
        </authorList>
    </citation>
    <scope>NUCLEOTIDE SEQUENCE [LARGE SCALE GENOMIC DNA]</scope>
    <source>
        <strain>KSM-K16</strain>
    </source>
</reference>
<sequence>MNQSEVEIVIITGMSGAGKSVAVRSFEDLGYYCIDNLPPVLLPKFIELIEGGIDKVTKVALVMDLRGQSFFDELFKAIDELNETPASRLKIQILYLDAKDSKLVQRYKETRRTHPLAKGGLPLEGIQKERNLLEEIKGRAQQIIDTTELKPLQLREKIMQRFAGNDRQAFAVHFVSFGFKYGIPIDADLVFDVRFLPNPHYVEDLRPKTGLQTEVSSYVLKWKETKQFVEKLTDLFDFMLPHYKREGKSQVVIGIGCTGGQHRSVTLAEYFCAHYEAKYDAYTSHRDINKRKANSR</sequence>
<dbReference type="EMBL" id="AP006627">
    <property type="protein sequence ID" value="BAD65570.1"/>
    <property type="molecule type" value="Genomic_DNA"/>
</dbReference>
<dbReference type="SMR" id="Q5WDJ0"/>
<dbReference type="STRING" id="66692.ABC3036"/>
<dbReference type="KEGG" id="bcl:ABC3036"/>
<dbReference type="eggNOG" id="COG1660">
    <property type="taxonomic scope" value="Bacteria"/>
</dbReference>
<dbReference type="HOGENOM" id="CLU_059558_0_0_9"/>
<dbReference type="OrthoDB" id="9784461at2"/>
<dbReference type="Proteomes" id="UP000001168">
    <property type="component" value="Chromosome"/>
</dbReference>
<dbReference type="GO" id="GO:0005524">
    <property type="term" value="F:ATP binding"/>
    <property type="evidence" value="ECO:0007669"/>
    <property type="project" value="UniProtKB-UniRule"/>
</dbReference>
<dbReference type="GO" id="GO:0005525">
    <property type="term" value="F:GTP binding"/>
    <property type="evidence" value="ECO:0007669"/>
    <property type="project" value="UniProtKB-UniRule"/>
</dbReference>
<dbReference type="HAMAP" id="MF_00636">
    <property type="entry name" value="RapZ_like"/>
    <property type="match status" value="1"/>
</dbReference>
<dbReference type="InterPro" id="IPR027417">
    <property type="entry name" value="P-loop_NTPase"/>
</dbReference>
<dbReference type="InterPro" id="IPR005337">
    <property type="entry name" value="RapZ-like"/>
</dbReference>
<dbReference type="InterPro" id="IPR053930">
    <property type="entry name" value="RapZ-like_N"/>
</dbReference>
<dbReference type="InterPro" id="IPR053931">
    <property type="entry name" value="RapZ_C"/>
</dbReference>
<dbReference type="NCBIfam" id="NF003828">
    <property type="entry name" value="PRK05416.1"/>
    <property type="match status" value="1"/>
</dbReference>
<dbReference type="PANTHER" id="PTHR30448">
    <property type="entry name" value="RNASE ADAPTER PROTEIN RAPZ"/>
    <property type="match status" value="1"/>
</dbReference>
<dbReference type="PANTHER" id="PTHR30448:SF0">
    <property type="entry name" value="RNASE ADAPTER PROTEIN RAPZ"/>
    <property type="match status" value="1"/>
</dbReference>
<dbReference type="Pfam" id="PF22740">
    <property type="entry name" value="PapZ_C"/>
    <property type="match status" value="1"/>
</dbReference>
<dbReference type="Pfam" id="PF03668">
    <property type="entry name" value="RapZ-like_N"/>
    <property type="match status" value="1"/>
</dbReference>
<dbReference type="PIRSF" id="PIRSF005052">
    <property type="entry name" value="P-loopkin"/>
    <property type="match status" value="1"/>
</dbReference>
<dbReference type="SUPFAM" id="SSF52540">
    <property type="entry name" value="P-loop containing nucleoside triphosphate hydrolases"/>
    <property type="match status" value="1"/>
</dbReference>
<accession>Q5WDJ0</accession>
<feature type="chain" id="PRO_0000107688" description="Nucleotide-binding protein ABC3036">
    <location>
        <begin position="1"/>
        <end position="296"/>
    </location>
</feature>
<feature type="binding site" evidence="1">
    <location>
        <begin position="13"/>
        <end position="20"/>
    </location>
    <ligand>
        <name>ATP</name>
        <dbReference type="ChEBI" id="CHEBI:30616"/>
    </ligand>
</feature>
<feature type="binding site" evidence="1">
    <location>
        <begin position="64"/>
        <end position="67"/>
    </location>
    <ligand>
        <name>GTP</name>
        <dbReference type="ChEBI" id="CHEBI:37565"/>
    </ligand>
</feature>
<comment type="function">
    <text evidence="1">Displays ATPase and GTPase activities.</text>
</comment>
<comment type="similarity">
    <text evidence="1">Belongs to the RapZ-like family.</text>
</comment>
<protein>
    <recommendedName>
        <fullName evidence="1">Nucleotide-binding protein ABC3036</fullName>
    </recommendedName>
</protein>